<keyword id="KW-0256">Endoplasmic reticulum</keyword>
<keyword id="KW-0328">Glycosyltransferase</keyword>
<keyword id="KW-0472">Membrane</keyword>
<keyword id="KW-1185">Reference proteome</keyword>
<keyword id="KW-0808">Transferase</keyword>
<keyword id="KW-0812">Transmembrane</keyword>
<keyword id="KW-1133">Transmembrane helix</keyword>
<reference key="1">
    <citation type="journal article" date="2009" name="Nature">
        <title>Evolution of pathogenicity and sexual reproduction in eight Candida genomes.</title>
        <authorList>
            <person name="Butler G."/>
            <person name="Rasmussen M.D."/>
            <person name="Lin M.F."/>
            <person name="Santos M.A.S."/>
            <person name="Sakthikumar S."/>
            <person name="Munro C.A."/>
            <person name="Rheinbay E."/>
            <person name="Grabherr M."/>
            <person name="Forche A."/>
            <person name="Reedy J.L."/>
            <person name="Agrafioti I."/>
            <person name="Arnaud M.B."/>
            <person name="Bates S."/>
            <person name="Brown A.J.P."/>
            <person name="Brunke S."/>
            <person name="Costanzo M.C."/>
            <person name="Fitzpatrick D.A."/>
            <person name="de Groot P.W.J."/>
            <person name="Harris D."/>
            <person name="Hoyer L.L."/>
            <person name="Hube B."/>
            <person name="Klis F.M."/>
            <person name="Kodira C."/>
            <person name="Lennard N."/>
            <person name="Logue M.E."/>
            <person name="Martin R."/>
            <person name="Neiman A.M."/>
            <person name="Nikolaou E."/>
            <person name="Quail M.A."/>
            <person name="Quinn J."/>
            <person name="Santos M.C."/>
            <person name="Schmitzberger F.F."/>
            <person name="Sherlock G."/>
            <person name="Shah P."/>
            <person name="Silverstein K.A.T."/>
            <person name="Skrzypek M.S."/>
            <person name="Soll D."/>
            <person name="Staggs R."/>
            <person name="Stansfield I."/>
            <person name="Stumpf M.P.H."/>
            <person name="Sudbery P.E."/>
            <person name="Srikantha T."/>
            <person name="Zeng Q."/>
            <person name="Berman J."/>
            <person name="Berriman M."/>
            <person name="Heitman J."/>
            <person name="Gow N.A.R."/>
            <person name="Lorenz M.C."/>
            <person name="Birren B.W."/>
            <person name="Kellis M."/>
            <person name="Cuomo C.A."/>
        </authorList>
    </citation>
    <scope>NUCLEOTIDE SEQUENCE [LARGE SCALE GENOMIC DNA]</scope>
    <source>
        <strain>ATCC 6260 / CBS 566 / DSM 6381 / JCM 1539 / NBRC 10279 / NRRL Y-324</strain>
    </source>
</reference>
<sequence>MEETHEPKKHSEKEEIEDGLSSKTEAPHLPEFTFKNVCNDIINGVIALFMDPFCNAIVVPILVVFTSIACKIVIANVKYTEIDFKTYMQQIDMINDGELDYSLIAGDTGPIVYPAGFVQIYQWLSWLSSGGEDIPVVQSVFGYLHTLTVLLTCCTYSLVGDVQPWAYMLIVASKRLMSIYVLRLFNDCFTTACMVGVTLVLQAASYWFDTLGSTLVFLLTLVAADLYSMAISIKMNALLFMPAFLIVVYFLCMENILKLLAVILVMVLVQVMVGWKFLLVLFHDEDANYLRMTYLQRAFDFKRSFLYEWTVNWRFVPEEYFTSKLFANFLLVCHISVLIFFVISRFFSSKITGKSLVTLVKDGFKPFNTIASTNLYVNKKQGPKLILLTFATTNTIGVLLSRSLHYQFLSWYCWHMPFLLYSTGWGPIISGAMWAVHEWCWLTFPSTIQSSAILVTILSFTLATVWHRGENWYGS</sequence>
<comment type="function">
    <text evidence="1">Dol-P-Man:Man(5)GlcNAc(2)-PP-Dol alpha-1,3-mannosyltransferase that operates in the biosynthetic pathway of dolichol-linked oligosaccharides, the glycan precursors employed in protein asparagine (N)-glycosylation. The assembly of dolichol-linked oligosaccharides begins on the cytosolic side of the endoplasmic reticulum membrane and finishes in its lumen. The sequential addition of sugars to dolichol pyrophosphate produces dolichol-linked oligosaccharides containing fourteen sugars, including two GlcNAcs, nine mannoses and three glucoses. Once assembled, the oligosaccharide is transferred from the lipid to nascent proteins by oligosaccharyltransferases. In the lumen of the endoplasmic reticulum, adds the first dolichyl beta-D-mannosyl phosphate derived mannose in an alpha-1,3 linkage to Man(5)GlcNAc(2)-PP-dolichol to produce Man(6)GlcNAc(2)-PP-dolichol.</text>
</comment>
<comment type="catalytic activity">
    <reaction evidence="1">
        <text>an alpha-D-Man-(1-&gt;2)-alpha-D-Man-(1-&gt;2)-alpha-D-Man-(1-&gt;3)-[alpha-D-Man-(1-&gt;6)]-beta-D-Man-(1-&gt;4)-beta-D-GlcNAc-(1-&gt;4)-alpha-D-GlcNAc-diphospho-di-trans,poly-cis-dolichol + a di-trans,poly-cis-dolichyl beta-D-mannosyl phosphate = an alpha-D-Man-(1-&gt;2)-alpha-D-Man-(1-&gt;2)-alpha-D-Man-(1-&gt;3)-[alpha-D-Man-(1-&gt;3)-alpha-D-Man-(1-&gt;6)]-beta-D-Man-(1-&gt;4)-beta-D-GlcNAc-(1-&gt;4)-alpha-D-GlcNAc-diphospho-di-trans,poly-cis-dolichol + a di-trans,poly-cis-dolichyl phosphate + H(+)</text>
        <dbReference type="Rhea" id="RHEA:29527"/>
        <dbReference type="Rhea" id="RHEA-COMP:19498"/>
        <dbReference type="Rhea" id="RHEA-COMP:19501"/>
        <dbReference type="Rhea" id="RHEA-COMP:19516"/>
        <dbReference type="Rhea" id="RHEA-COMP:19517"/>
        <dbReference type="ChEBI" id="CHEBI:15378"/>
        <dbReference type="ChEBI" id="CHEBI:57683"/>
        <dbReference type="ChEBI" id="CHEBI:58211"/>
        <dbReference type="ChEBI" id="CHEBI:132515"/>
        <dbReference type="ChEBI" id="CHEBI:132516"/>
        <dbReference type="EC" id="2.4.1.258"/>
    </reaction>
    <physiologicalReaction direction="left-to-right" evidence="1">
        <dbReference type="Rhea" id="RHEA:29528"/>
    </physiologicalReaction>
</comment>
<comment type="pathway">
    <text evidence="1">Protein modification; protein glycosylation.</text>
</comment>
<comment type="subcellular location">
    <subcellularLocation>
        <location evidence="1">Endoplasmic reticulum membrane</location>
        <topology evidence="2">Multi-pass membrane protein</topology>
    </subcellularLocation>
</comment>
<comment type="similarity">
    <text evidence="4">Belongs to the glycosyltransferase ALG3 family.</text>
</comment>
<gene>
    <name type="primary">ALG3</name>
    <name type="ORF">PGUG_03506</name>
</gene>
<evidence type="ECO:0000250" key="1">
    <source>
        <dbReference type="UniProtKB" id="P38179"/>
    </source>
</evidence>
<evidence type="ECO:0000255" key="2"/>
<evidence type="ECO:0000256" key="3">
    <source>
        <dbReference type="SAM" id="MobiDB-lite"/>
    </source>
</evidence>
<evidence type="ECO:0000305" key="4"/>
<organism>
    <name type="scientific">Meyerozyma guilliermondii (strain ATCC 6260 / CBS 566 / DSM 6381 / JCM 1539 / NBRC 10279 / NRRL Y-324)</name>
    <name type="common">Yeast</name>
    <name type="synonym">Candida guilliermondii</name>
    <dbReference type="NCBI Taxonomy" id="294746"/>
    <lineage>
        <taxon>Eukaryota</taxon>
        <taxon>Fungi</taxon>
        <taxon>Dikarya</taxon>
        <taxon>Ascomycota</taxon>
        <taxon>Saccharomycotina</taxon>
        <taxon>Pichiomycetes</taxon>
        <taxon>Debaryomycetaceae</taxon>
        <taxon>Meyerozyma</taxon>
    </lineage>
</organism>
<proteinExistence type="inferred from homology"/>
<feature type="chain" id="PRO_0000350930" description="Dol-P-Man:Man(5)GlcNAc(2)-PP-Dol alpha-1,3-mannosyltransferase">
    <location>
        <begin position="1"/>
        <end position="475"/>
    </location>
</feature>
<feature type="topological domain" description="Lumenal" evidence="2">
    <location>
        <begin position="1"/>
        <end position="56"/>
    </location>
</feature>
<feature type="transmembrane region" description="Helical" evidence="2">
    <location>
        <begin position="57"/>
        <end position="79"/>
    </location>
</feature>
<feature type="topological domain" description="Cytoplasmic" evidence="2">
    <location>
        <begin position="80"/>
        <end position="98"/>
    </location>
</feature>
<feature type="transmembrane region" description="Helical" evidence="2">
    <location>
        <begin position="99"/>
        <end position="121"/>
    </location>
</feature>
<feature type="topological domain" description="Lumenal" evidence="2">
    <location>
        <begin position="122"/>
        <end position="139"/>
    </location>
</feature>
<feature type="transmembrane region" description="Helical" evidence="2">
    <location>
        <begin position="140"/>
        <end position="160"/>
    </location>
</feature>
<feature type="topological domain" description="Cytoplasmic" evidence="2">
    <location>
        <begin position="161"/>
        <end position="187"/>
    </location>
</feature>
<feature type="transmembrane region" description="Helical" evidence="2">
    <location>
        <begin position="188"/>
        <end position="208"/>
    </location>
</feature>
<feature type="topological domain" description="Lumenal" evidence="2">
    <location>
        <begin position="209"/>
        <end position="210"/>
    </location>
</feature>
<feature type="transmembrane region" description="Helical" evidence="2">
    <location>
        <begin position="211"/>
        <end position="231"/>
    </location>
</feature>
<feature type="topological domain" description="Cytoplasmic" evidence="2">
    <location>
        <begin position="232"/>
        <end position="236"/>
    </location>
</feature>
<feature type="transmembrane region" description="Helical" evidence="2">
    <location>
        <begin position="237"/>
        <end position="257"/>
    </location>
</feature>
<feature type="topological domain" description="Lumenal" evidence="2">
    <location>
        <begin position="258"/>
        <end position="261"/>
    </location>
</feature>
<feature type="transmembrane region" description="Helical" evidence="2">
    <location>
        <begin position="262"/>
        <end position="282"/>
    </location>
</feature>
<feature type="topological domain" description="Cytoplasmic" evidence="2">
    <location>
        <begin position="283"/>
        <end position="322"/>
    </location>
</feature>
<feature type="transmembrane region" description="Helical" evidence="2">
    <location>
        <begin position="323"/>
        <end position="343"/>
    </location>
</feature>
<feature type="topological domain" description="Lumenal" evidence="2">
    <location>
        <begin position="344"/>
        <end position="384"/>
    </location>
</feature>
<feature type="transmembrane region" description="Helical" evidence="2">
    <location>
        <begin position="385"/>
        <end position="404"/>
    </location>
</feature>
<feature type="topological domain" description="Cytoplasmic" evidence="2">
    <location>
        <begin position="405"/>
        <end position="415"/>
    </location>
</feature>
<feature type="transmembrane region" description="Helical" evidence="2">
    <location>
        <begin position="416"/>
        <end position="436"/>
    </location>
</feature>
<feature type="topological domain" description="Lumenal" evidence="2">
    <location>
        <begin position="437"/>
        <end position="445"/>
    </location>
</feature>
<feature type="transmembrane region" description="Helical" evidence="2">
    <location>
        <begin position="446"/>
        <end position="466"/>
    </location>
</feature>
<feature type="topological domain" description="Cytoplasmic" evidence="2">
    <location>
        <begin position="467"/>
        <end position="475"/>
    </location>
</feature>
<feature type="region of interest" description="Disordered" evidence="3">
    <location>
        <begin position="1"/>
        <end position="22"/>
    </location>
</feature>
<feature type="compositionally biased region" description="Basic and acidic residues" evidence="3">
    <location>
        <begin position="1"/>
        <end position="13"/>
    </location>
</feature>
<accession>A5DJQ5</accession>
<protein>
    <recommendedName>
        <fullName evidence="1">Dol-P-Man:Man(5)GlcNAc(2)-PP-Dol alpha-1,3-mannosyltransferase</fullName>
        <ecNumber evidence="1">2.4.1.258</ecNumber>
    </recommendedName>
    <alternativeName>
        <fullName>Asparagine-linked glycosylation protein 6</fullName>
    </alternativeName>
    <alternativeName>
        <fullName>Dol-P-Man-dependent alpha(1-3)-mannosyltransferase</fullName>
    </alternativeName>
    <alternativeName>
        <fullName>Dolichyl-P-Man:Man(5)GlcNAc(2)-PP-dolichyl mannosyltransferase</fullName>
    </alternativeName>
</protein>
<dbReference type="EC" id="2.4.1.258" evidence="1"/>
<dbReference type="EMBL" id="CH408158">
    <property type="protein sequence ID" value="EDK39408.2"/>
    <property type="molecule type" value="Genomic_DNA"/>
</dbReference>
<dbReference type="RefSeq" id="XP_001484125.1">
    <property type="nucleotide sequence ID" value="XM_001484075.1"/>
</dbReference>
<dbReference type="FunCoup" id="A5DJQ5">
    <property type="interactions" value="654"/>
</dbReference>
<dbReference type="STRING" id="294746.A5DJQ5"/>
<dbReference type="GeneID" id="5126391"/>
<dbReference type="KEGG" id="pgu:PGUG_03506"/>
<dbReference type="VEuPathDB" id="FungiDB:PGUG_03506"/>
<dbReference type="eggNOG" id="KOG2762">
    <property type="taxonomic scope" value="Eukaryota"/>
</dbReference>
<dbReference type="HOGENOM" id="CLU_035382_3_0_1"/>
<dbReference type="InParanoid" id="A5DJQ5"/>
<dbReference type="OMA" id="PERYGIH"/>
<dbReference type="OrthoDB" id="20028at2759"/>
<dbReference type="UniPathway" id="UPA00378"/>
<dbReference type="Proteomes" id="UP000001997">
    <property type="component" value="Unassembled WGS sequence"/>
</dbReference>
<dbReference type="GO" id="GO:0005789">
    <property type="term" value="C:endoplasmic reticulum membrane"/>
    <property type="evidence" value="ECO:0007669"/>
    <property type="project" value="UniProtKB-SubCell"/>
</dbReference>
<dbReference type="GO" id="GO:0052925">
    <property type="term" value="F:dol-P-Man:Man(5)GlcNAc(2)-PP-Dol alpha-1,3-mannosyltransferase activity"/>
    <property type="evidence" value="ECO:0007669"/>
    <property type="project" value="UniProtKB-EC"/>
</dbReference>
<dbReference type="GO" id="GO:0006488">
    <property type="term" value="P:dolichol-linked oligosaccharide biosynthetic process"/>
    <property type="evidence" value="ECO:0007669"/>
    <property type="project" value="EnsemblFungi"/>
</dbReference>
<dbReference type="InterPro" id="IPR007873">
    <property type="entry name" value="Glycosyltransferase_ALG3"/>
</dbReference>
<dbReference type="PANTHER" id="PTHR12646:SF0">
    <property type="entry name" value="DOL-P-MAN:MAN(5)GLCNAC(2)-PP-DOL ALPHA-1,3-MANNOSYLTRANSFERASE"/>
    <property type="match status" value="1"/>
</dbReference>
<dbReference type="PANTHER" id="PTHR12646">
    <property type="entry name" value="NOT56 - RELATED"/>
    <property type="match status" value="1"/>
</dbReference>
<dbReference type="Pfam" id="PF05208">
    <property type="entry name" value="ALG3"/>
    <property type="match status" value="1"/>
</dbReference>
<name>ALG3_PICGU</name>